<reference key="1">
    <citation type="journal article" date="2000" name="Nature">
        <title>Sequence and analysis of chromosome 3 of the plant Arabidopsis thaliana.</title>
        <authorList>
            <person name="Salanoubat M."/>
            <person name="Lemcke K."/>
            <person name="Rieger M."/>
            <person name="Ansorge W."/>
            <person name="Unseld M."/>
            <person name="Fartmann B."/>
            <person name="Valle G."/>
            <person name="Bloecker H."/>
            <person name="Perez-Alonso M."/>
            <person name="Obermaier B."/>
            <person name="Delseny M."/>
            <person name="Boutry M."/>
            <person name="Grivell L.A."/>
            <person name="Mache R."/>
            <person name="Puigdomenech P."/>
            <person name="De Simone V."/>
            <person name="Choisne N."/>
            <person name="Artiguenave F."/>
            <person name="Robert C."/>
            <person name="Brottier P."/>
            <person name="Wincker P."/>
            <person name="Cattolico L."/>
            <person name="Weissenbach J."/>
            <person name="Saurin W."/>
            <person name="Quetier F."/>
            <person name="Schaefer M."/>
            <person name="Mueller-Auer S."/>
            <person name="Gabel C."/>
            <person name="Fuchs M."/>
            <person name="Benes V."/>
            <person name="Wurmbach E."/>
            <person name="Drzonek H."/>
            <person name="Erfle H."/>
            <person name="Jordan N."/>
            <person name="Bangert S."/>
            <person name="Wiedelmann R."/>
            <person name="Kranz H."/>
            <person name="Voss H."/>
            <person name="Holland R."/>
            <person name="Brandt P."/>
            <person name="Nyakatura G."/>
            <person name="Vezzi A."/>
            <person name="D'Angelo M."/>
            <person name="Pallavicini A."/>
            <person name="Toppo S."/>
            <person name="Simionati B."/>
            <person name="Conrad A."/>
            <person name="Hornischer K."/>
            <person name="Kauer G."/>
            <person name="Loehnert T.-H."/>
            <person name="Nordsiek G."/>
            <person name="Reichelt J."/>
            <person name="Scharfe M."/>
            <person name="Schoen O."/>
            <person name="Bargues M."/>
            <person name="Terol J."/>
            <person name="Climent J."/>
            <person name="Navarro P."/>
            <person name="Collado C."/>
            <person name="Perez-Perez A."/>
            <person name="Ottenwaelder B."/>
            <person name="Duchemin D."/>
            <person name="Cooke R."/>
            <person name="Laudie M."/>
            <person name="Berger-Llauro C."/>
            <person name="Purnelle B."/>
            <person name="Masuy D."/>
            <person name="de Haan M."/>
            <person name="Maarse A.C."/>
            <person name="Alcaraz J.-P."/>
            <person name="Cottet A."/>
            <person name="Casacuberta E."/>
            <person name="Monfort A."/>
            <person name="Argiriou A."/>
            <person name="Flores M."/>
            <person name="Liguori R."/>
            <person name="Vitale D."/>
            <person name="Mannhaupt G."/>
            <person name="Haase D."/>
            <person name="Schoof H."/>
            <person name="Rudd S."/>
            <person name="Zaccaria P."/>
            <person name="Mewes H.-W."/>
            <person name="Mayer K.F.X."/>
            <person name="Kaul S."/>
            <person name="Town C.D."/>
            <person name="Koo H.L."/>
            <person name="Tallon L.J."/>
            <person name="Jenkins J."/>
            <person name="Rooney T."/>
            <person name="Rizzo M."/>
            <person name="Walts A."/>
            <person name="Utterback T."/>
            <person name="Fujii C.Y."/>
            <person name="Shea T.P."/>
            <person name="Creasy T.H."/>
            <person name="Haas B."/>
            <person name="Maiti R."/>
            <person name="Wu D."/>
            <person name="Peterson J."/>
            <person name="Van Aken S."/>
            <person name="Pai G."/>
            <person name="Militscher J."/>
            <person name="Sellers P."/>
            <person name="Gill J.E."/>
            <person name="Feldblyum T.V."/>
            <person name="Preuss D."/>
            <person name="Lin X."/>
            <person name="Nierman W.C."/>
            <person name="Salzberg S.L."/>
            <person name="White O."/>
            <person name="Venter J.C."/>
            <person name="Fraser C.M."/>
            <person name="Kaneko T."/>
            <person name="Nakamura Y."/>
            <person name="Sato S."/>
            <person name="Kato T."/>
            <person name="Asamizu E."/>
            <person name="Sasamoto S."/>
            <person name="Kimura T."/>
            <person name="Idesawa K."/>
            <person name="Kawashima K."/>
            <person name="Kishida Y."/>
            <person name="Kiyokawa C."/>
            <person name="Kohara M."/>
            <person name="Matsumoto M."/>
            <person name="Matsuno A."/>
            <person name="Muraki A."/>
            <person name="Nakayama S."/>
            <person name="Nakazaki N."/>
            <person name="Shinpo S."/>
            <person name="Takeuchi C."/>
            <person name="Wada T."/>
            <person name="Watanabe A."/>
            <person name="Yamada M."/>
            <person name="Yasuda M."/>
            <person name="Tabata S."/>
        </authorList>
    </citation>
    <scope>NUCLEOTIDE SEQUENCE [LARGE SCALE GENOMIC DNA]</scope>
    <source>
        <strain>cv. Columbia</strain>
    </source>
</reference>
<reference key="2">
    <citation type="journal article" date="2017" name="Plant J.">
        <title>Araport11: a complete reannotation of the Arabidopsis thaliana reference genome.</title>
        <authorList>
            <person name="Cheng C.Y."/>
            <person name="Krishnakumar V."/>
            <person name="Chan A.P."/>
            <person name="Thibaud-Nissen F."/>
            <person name="Schobel S."/>
            <person name="Town C.D."/>
        </authorList>
    </citation>
    <scope>GENOME REANNOTATION</scope>
    <source>
        <strain>cv. Columbia</strain>
    </source>
</reference>
<reference key="3">
    <citation type="journal article" date="2003" name="Science">
        <title>Empirical analysis of transcriptional activity in the Arabidopsis genome.</title>
        <authorList>
            <person name="Yamada K."/>
            <person name="Lim J."/>
            <person name="Dale J.M."/>
            <person name="Chen H."/>
            <person name="Shinn P."/>
            <person name="Palm C.J."/>
            <person name="Southwick A.M."/>
            <person name="Wu H.C."/>
            <person name="Kim C.J."/>
            <person name="Nguyen M."/>
            <person name="Pham P.K."/>
            <person name="Cheuk R.F."/>
            <person name="Karlin-Newmann G."/>
            <person name="Liu S.X."/>
            <person name="Lam B."/>
            <person name="Sakano H."/>
            <person name="Wu T."/>
            <person name="Yu G."/>
            <person name="Miranda M."/>
            <person name="Quach H.L."/>
            <person name="Tripp M."/>
            <person name="Chang C.H."/>
            <person name="Lee J.M."/>
            <person name="Toriumi M.J."/>
            <person name="Chan M.M."/>
            <person name="Tang C.C."/>
            <person name="Onodera C.S."/>
            <person name="Deng J.M."/>
            <person name="Akiyama K."/>
            <person name="Ansari Y."/>
            <person name="Arakawa T."/>
            <person name="Banh J."/>
            <person name="Banno F."/>
            <person name="Bowser L."/>
            <person name="Brooks S.Y."/>
            <person name="Carninci P."/>
            <person name="Chao Q."/>
            <person name="Choy N."/>
            <person name="Enju A."/>
            <person name="Goldsmith A.D."/>
            <person name="Gurjal M."/>
            <person name="Hansen N.F."/>
            <person name="Hayashizaki Y."/>
            <person name="Johnson-Hopson C."/>
            <person name="Hsuan V.W."/>
            <person name="Iida K."/>
            <person name="Karnes M."/>
            <person name="Khan S."/>
            <person name="Koesema E."/>
            <person name="Ishida J."/>
            <person name="Jiang P.X."/>
            <person name="Jones T."/>
            <person name="Kawai J."/>
            <person name="Kamiya A."/>
            <person name="Meyers C."/>
            <person name="Nakajima M."/>
            <person name="Narusaka M."/>
            <person name="Seki M."/>
            <person name="Sakurai T."/>
            <person name="Satou M."/>
            <person name="Tamse R."/>
            <person name="Vaysberg M."/>
            <person name="Wallender E.K."/>
            <person name="Wong C."/>
            <person name="Yamamura Y."/>
            <person name="Yuan S."/>
            <person name="Shinozaki K."/>
            <person name="Davis R.W."/>
            <person name="Theologis A."/>
            <person name="Ecker J.R."/>
        </authorList>
    </citation>
    <scope>NUCLEOTIDE SEQUENCE [LARGE SCALE MRNA]</scope>
    <source>
        <strain>cv. Columbia</strain>
    </source>
</reference>
<reference key="4">
    <citation type="journal article" date="2001" name="Plant Physiol.">
        <title>The organization of cytoplasmic ribosomal protein genes in the Arabidopsis genome.</title>
        <authorList>
            <person name="Barakat A."/>
            <person name="Szick-Miranda K."/>
            <person name="Chang I.-F."/>
            <person name="Guyot R."/>
            <person name="Blanc G."/>
            <person name="Cooke R."/>
            <person name="Delseny M."/>
            <person name="Bailey-Serres J."/>
        </authorList>
    </citation>
    <scope>GENE FAMILY ORGANIZATION</scope>
    <scope>NOMENCLATURE</scope>
</reference>
<reference key="5">
    <citation type="journal article" date="2023" name="Plant Cell">
        <title>An updated nomenclature for plant ribosomal protein genes.</title>
        <authorList>
            <person name="Scarpin M.R."/>
            <person name="Busche M."/>
            <person name="Martinez R.E."/>
            <person name="Harper L.C."/>
            <person name="Reiser L."/>
            <person name="Szakonyi D."/>
            <person name="Merchante C."/>
            <person name="Lan T."/>
            <person name="Xiong W."/>
            <person name="Mo B."/>
            <person name="Tang G."/>
            <person name="Chen X."/>
            <person name="Bailey-Serres J."/>
            <person name="Browning K.S."/>
            <person name="Brunkard J.O."/>
        </authorList>
    </citation>
    <scope>NOMENCLATURE</scope>
</reference>
<organism>
    <name type="scientific">Arabidopsis thaliana</name>
    <name type="common">Mouse-ear cress</name>
    <dbReference type="NCBI Taxonomy" id="3702"/>
    <lineage>
        <taxon>Eukaryota</taxon>
        <taxon>Viridiplantae</taxon>
        <taxon>Streptophyta</taxon>
        <taxon>Embryophyta</taxon>
        <taxon>Tracheophyta</taxon>
        <taxon>Spermatophyta</taxon>
        <taxon>Magnoliopsida</taxon>
        <taxon>eudicotyledons</taxon>
        <taxon>Gunneridae</taxon>
        <taxon>Pentapetalae</taxon>
        <taxon>rosids</taxon>
        <taxon>malvids</taxon>
        <taxon>Brassicales</taxon>
        <taxon>Brassicaceae</taxon>
        <taxon>Camelineae</taxon>
        <taxon>Arabidopsis</taxon>
    </lineage>
</organism>
<accession>Q9SFU1</accession>
<keyword id="KW-0025">Alternative splicing</keyword>
<keyword id="KW-1185">Reference proteome</keyword>
<keyword id="KW-0687">Ribonucleoprotein</keyword>
<keyword id="KW-0689">Ribosomal protein</keyword>
<name>R13A1_ARATH</name>
<gene>
    <name type="primary">RPL13AA</name>
    <name type="ordered locus">At3g07110</name>
    <name type="ORF">T1B9.24</name>
</gene>
<proteinExistence type="evidence at transcript level"/>
<protein>
    <recommendedName>
        <fullName evidence="1">Large ribosomal subunit protein uL13z</fullName>
    </recommendedName>
    <alternativeName>
        <fullName>60S ribosomal protein L13a-1</fullName>
    </alternativeName>
</protein>
<comment type="alternative products">
    <event type="alternative splicing"/>
    <isoform>
        <id>Q9SFU1-1</id>
        <name>1</name>
        <sequence type="displayed"/>
    </isoform>
    <text>A number of isoforms are produced. According to EST sequences.</text>
</comment>
<comment type="similarity">
    <text evidence="2">Belongs to the universal ribosomal protein uL13 family.</text>
</comment>
<sequence>MVSGSGICAKRVVVDARHHMLGRLASVVAKDLLNGQNIVVVRCEEICLSGGLVRQKMKYMRFLRKRMNTKPSHGPIHFRAPSKIFWRTVRGMIPHKTKRGANALARLKVFEGVPTPYDKIKRMVVPDALKVLRLQAGHKYCLLGRLSSEVGWNHYDTIKELENKRKERAQAVYERKKQLSKLRAKAEKVAEEKLGSQLDVLAPVKY</sequence>
<dbReference type="EMBL" id="AC012395">
    <property type="protein sequence ID" value="AAF20235.1"/>
    <property type="molecule type" value="Genomic_DNA"/>
</dbReference>
<dbReference type="EMBL" id="CP002686">
    <property type="protein sequence ID" value="AEE74499.1"/>
    <property type="molecule type" value="Genomic_DNA"/>
</dbReference>
<dbReference type="EMBL" id="AF325041">
    <property type="protein sequence ID" value="AAG40393.1"/>
    <property type="molecule type" value="mRNA"/>
</dbReference>
<dbReference type="EMBL" id="AY057551">
    <property type="protein sequence ID" value="AAL09790.1"/>
    <property type="molecule type" value="mRNA"/>
</dbReference>
<dbReference type="EMBL" id="AY062793">
    <property type="protein sequence ID" value="AAL32871.1"/>
    <property type="molecule type" value="mRNA"/>
</dbReference>
<dbReference type="EMBL" id="AY114589">
    <property type="protein sequence ID" value="AAM47908.1"/>
    <property type="molecule type" value="mRNA"/>
</dbReference>
<dbReference type="RefSeq" id="NP_187367.1">
    <molecule id="Q9SFU1-1"/>
    <property type="nucleotide sequence ID" value="NM_111591.4"/>
</dbReference>
<dbReference type="SMR" id="Q9SFU1"/>
<dbReference type="BioGRID" id="5232">
    <property type="interactions" value="46"/>
</dbReference>
<dbReference type="FunCoup" id="Q9SFU1">
    <property type="interactions" value="3210"/>
</dbReference>
<dbReference type="IntAct" id="Q9SFU1">
    <property type="interactions" value="1"/>
</dbReference>
<dbReference type="STRING" id="3702.Q9SFU1"/>
<dbReference type="iPTMnet" id="Q9SFU1"/>
<dbReference type="PaxDb" id="3702-AT3G07110.2"/>
<dbReference type="ProteomicsDB" id="225936">
    <molecule id="Q9SFU1-1"/>
</dbReference>
<dbReference type="EnsemblPlants" id="AT3G07110.1">
    <molecule id="Q9SFU1-1"/>
    <property type="protein sequence ID" value="AT3G07110.1"/>
    <property type="gene ID" value="AT3G07110"/>
</dbReference>
<dbReference type="GeneID" id="819897"/>
<dbReference type="Gramene" id="AT3G07110.1">
    <molecule id="Q9SFU1-1"/>
    <property type="protein sequence ID" value="AT3G07110.1"/>
    <property type="gene ID" value="AT3G07110"/>
</dbReference>
<dbReference type="KEGG" id="ath:AT3G07110"/>
<dbReference type="Araport" id="AT3G07110"/>
<dbReference type="TAIR" id="AT3G07110"/>
<dbReference type="eggNOG" id="KOG3204">
    <property type="taxonomic scope" value="Eukaryota"/>
</dbReference>
<dbReference type="HOGENOM" id="CLU_076922_0_0_1"/>
<dbReference type="InParanoid" id="Q9SFU1"/>
<dbReference type="OMA" id="RMAHDRY"/>
<dbReference type="OrthoDB" id="1882297at2759"/>
<dbReference type="PhylomeDB" id="Q9SFU1"/>
<dbReference type="CD-CODE" id="4299E36E">
    <property type="entry name" value="Nucleolus"/>
</dbReference>
<dbReference type="PRO" id="PR:Q9SFU1"/>
<dbReference type="Proteomes" id="UP000006548">
    <property type="component" value="Chromosome 3"/>
</dbReference>
<dbReference type="ExpressionAtlas" id="Q9SFU1">
    <property type="expression patterns" value="baseline and differential"/>
</dbReference>
<dbReference type="GO" id="GO:0015934">
    <property type="term" value="C:large ribosomal subunit"/>
    <property type="evidence" value="ECO:0007669"/>
    <property type="project" value="InterPro"/>
</dbReference>
<dbReference type="GO" id="GO:0003735">
    <property type="term" value="F:structural constituent of ribosome"/>
    <property type="evidence" value="ECO:0007669"/>
    <property type="project" value="InterPro"/>
</dbReference>
<dbReference type="GO" id="GO:0006412">
    <property type="term" value="P:translation"/>
    <property type="evidence" value="ECO:0007669"/>
    <property type="project" value="InterPro"/>
</dbReference>
<dbReference type="CDD" id="cd00392">
    <property type="entry name" value="Ribosomal_L13"/>
    <property type="match status" value="1"/>
</dbReference>
<dbReference type="FunFam" id="6.10.250.3250:FF:000001">
    <property type="entry name" value="60S ribosomal protein L13a"/>
    <property type="match status" value="1"/>
</dbReference>
<dbReference type="FunFam" id="3.90.1180.10:FF:000003">
    <property type="entry name" value="60S ribosomal protein L13a-4"/>
    <property type="match status" value="1"/>
</dbReference>
<dbReference type="Gene3D" id="6.10.250.3250">
    <property type="match status" value="1"/>
</dbReference>
<dbReference type="Gene3D" id="3.90.1180.10">
    <property type="entry name" value="Ribosomal protein L13"/>
    <property type="match status" value="1"/>
</dbReference>
<dbReference type="HAMAP" id="MF_01366">
    <property type="entry name" value="Ribosomal_uL13"/>
    <property type="match status" value="1"/>
</dbReference>
<dbReference type="InterPro" id="IPR005822">
    <property type="entry name" value="Ribosomal_uL13"/>
</dbReference>
<dbReference type="InterPro" id="IPR023563">
    <property type="entry name" value="Ribosomal_uL13_CS"/>
</dbReference>
<dbReference type="InterPro" id="IPR005755">
    <property type="entry name" value="Ribosomal_uL13_euk/arc"/>
</dbReference>
<dbReference type="InterPro" id="IPR036899">
    <property type="entry name" value="Ribosomal_uL13_sf"/>
</dbReference>
<dbReference type="NCBIfam" id="TIGR01077">
    <property type="entry name" value="L13_A_E"/>
    <property type="match status" value="1"/>
</dbReference>
<dbReference type="PANTHER" id="PTHR11545:SF39">
    <property type="entry name" value="LARGE RIBOSOMAL SUBUNIT PROTEIN UL13X-RELATED"/>
    <property type="match status" value="1"/>
</dbReference>
<dbReference type="PANTHER" id="PTHR11545">
    <property type="entry name" value="RIBOSOMAL PROTEIN L13"/>
    <property type="match status" value="1"/>
</dbReference>
<dbReference type="Pfam" id="PF00572">
    <property type="entry name" value="Ribosomal_L13"/>
    <property type="match status" value="1"/>
</dbReference>
<dbReference type="SUPFAM" id="SSF52161">
    <property type="entry name" value="Ribosomal protein L13"/>
    <property type="match status" value="1"/>
</dbReference>
<dbReference type="PROSITE" id="PS00783">
    <property type="entry name" value="RIBOSOMAL_L13"/>
    <property type="match status" value="1"/>
</dbReference>
<evidence type="ECO:0000303" key="1">
    <source>
    </source>
</evidence>
<evidence type="ECO:0000305" key="2"/>
<feature type="chain" id="PRO_0000133780" description="Large ribosomal subunit protein uL13z">
    <location>
        <begin position="1"/>
        <end position="206"/>
    </location>
</feature>